<comment type="function">
    <text evidence="1 2">Acts as a Baeyer-Villiger monooxygenase on a broad range of substrates. Catalyzes the insertion of an oxygen atom into a carbon-carbon bond adjacent to a carbonyl, which converts ketones to esters. Active on diverse carbonyl compounds, whereas soft nucleophiles are mostly non- or poorly reactive. In contrast with other forms of FMO it is non- or poorly active on 'classical' substrates such as drugs, pesticides, and dietary components containing soft nucleophilic heteroatoms. Able to oxidize drug molecules bearing a carbonyl group on an aliphatic chain, such as nabumetone and pentoxifylline. Also, in the absence of substrates, shows slow but yet significant NADPH oxidase activity (By similarity). Acts as a positive modulator of cholesterol biosynthesis as well as glucose homeostasis, promoting metabolic aging via pleiotropic effects (By similarity).</text>
</comment>
<comment type="catalytic activity">
    <reaction evidence="1">
        <text>N,N-dimethylaniline + NADPH + O2 + H(+) = N,N-dimethylaniline N-oxide + NADP(+) + H2O</text>
        <dbReference type="Rhea" id="RHEA:24468"/>
        <dbReference type="ChEBI" id="CHEBI:15377"/>
        <dbReference type="ChEBI" id="CHEBI:15378"/>
        <dbReference type="ChEBI" id="CHEBI:15379"/>
        <dbReference type="ChEBI" id="CHEBI:16269"/>
        <dbReference type="ChEBI" id="CHEBI:17735"/>
        <dbReference type="ChEBI" id="CHEBI:57783"/>
        <dbReference type="ChEBI" id="CHEBI:58349"/>
        <dbReference type="EC" id="1.14.13.8"/>
    </reaction>
    <physiologicalReaction direction="left-to-right" evidence="1">
        <dbReference type="Rhea" id="RHEA:24469"/>
    </physiologicalReaction>
</comment>
<comment type="catalytic activity">
    <reaction evidence="1">
        <text>NADPH + O2 + H(+) = H2O2 + NADP(+)</text>
        <dbReference type="Rhea" id="RHEA:11260"/>
        <dbReference type="ChEBI" id="CHEBI:15378"/>
        <dbReference type="ChEBI" id="CHEBI:15379"/>
        <dbReference type="ChEBI" id="CHEBI:16240"/>
        <dbReference type="ChEBI" id="CHEBI:57783"/>
        <dbReference type="ChEBI" id="CHEBI:58349"/>
        <dbReference type="EC" id="1.6.3.1"/>
    </reaction>
    <physiologicalReaction direction="left-to-right" evidence="1">
        <dbReference type="Rhea" id="RHEA:11261"/>
    </physiologicalReaction>
</comment>
<comment type="catalytic activity">
    <reaction evidence="1">
        <text>heptan-2-one + NADPH + O2 + H(+) = pentyl acetate + NADP(+) + H2O</text>
        <dbReference type="Rhea" id="RHEA:54836"/>
        <dbReference type="ChEBI" id="CHEBI:5672"/>
        <dbReference type="ChEBI" id="CHEBI:15377"/>
        <dbReference type="ChEBI" id="CHEBI:15378"/>
        <dbReference type="ChEBI" id="CHEBI:15379"/>
        <dbReference type="ChEBI" id="CHEBI:57783"/>
        <dbReference type="ChEBI" id="CHEBI:58349"/>
        <dbReference type="ChEBI" id="CHEBI:87362"/>
    </reaction>
    <physiologicalReaction direction="left-to-right" evidence="1">
        <dbReference type="Rhea" id="RHEA:54837"/>
    </physiologicalReaction>
</comment>
<comment type="catalytic activity">
    <reaction evidence="1">
        <text>octan-3-one + NADPH + O2 + H(+) = pentyl propanoate + NADP(+) + H2O</text>
        <dbReference type="Rhea" id="RHEA:54840"/>
        <dbReference type="ChEBI" id="CHEBI:15377"/>
        <dbReference type="ChEBI" id="CHEBI:15378"/>
        <dbReference type="ChEBI" id="CHEBI:15379"/>
        <dbReference type="ChEBI" id="CHEBI:57783"/>
        <dbReference type="ChEBI" id="CHEBI:58349"/>
        <dbReference type="ChEBI" id="CHEBI:80946"/>
        <dbReference type="ChEBI" id="CHEBI:87373"/>
    </reaction>
    <physiologicalReaction direction="left-to-right" evidence="1">
        <dbReference type="Rhea" id="RHEA:54841"/>
    </physiologicalReaction>
</comment>
<comment type="catalytic activity">
    <reaction evidence="1">
        <text>octan-3-one + NADPH + O2 + H(+) = ethyl hexanoate + NADP(+) + H2O</text>
        <dbReference type="Rhea" id="RHEA:54856"/>
        <dbReference type="ChEBI" id="CHEBI:15377"/>
        <dbReference type="ChEBI" id="CHEBI:15378"/>
        <dbReference type="ChEBI" id="CHEBI:15379"/>
        <dbReference type="ChEBI" id="CHEBI:57783"/>
        <dbReference type="ChEBI" id="CHEBI:58349"/>
        <dbReference type="ChEBI" id="CHEBI:80946"/>
        <dbReference type="ChEBI" id="CHEBI:86055"/>
    </reaction>
    <physiologicalReaction direction="left-to-right" evidence="1">
        <dbReference type="Rhea" id="RHEA:54857"/>
    </physiologicalReaction>
</comment>
<comment type="catalytic activity">
    <reaction evidence="1">
        <text>hexan-3-one + NADPH + O2 + H(+) = ethyl butanoate + NADP(+) + H2O</text>
        <dbReference type="Rhea" id="RHEA:54844"/>
        <dbReference type="ChEBI" id="CHEBI:15377"/>
        <dbReference type="ChEBI" id="CHEBI:15378"/>
        <dbReference type="ChEBI" id="CHEBI:15379"/>
        <dbReference type="ChEBI" id="CHEBI:57783"/>
        <dbReference type="ChEBI" id="CHEBI:58349"/>
        <dbReference type="ChEBI" id="CHEBI:88764"/>
        <dbReference type="ChEBI" id="CHEBI:89891"/>
    </reaction>
    <physiologicalReaction direction="left-to-right" evidence="1">
        <dbReference type="Rhea" id="RHEA:54845"/>
    </physiologicalReaction>
</comment>
<comment type="catalytic activity">
    <reaction evidence="1">
        <text>hexan-3-one + NADPH + O2 + H(+) = propyl propanoate + NADP(+) + H2O</text>
        <dbReference type="Rhea" id="RHEA:54848"/>
        <dbReference type="ChEBI" id="CHEBI:15377"/>
        <dbReference type="ChEBI" id="CHEBI:15378"/>
        <dbReference type="ChEBI" id="CHEBI:15379"/>
        <dbReference type="ChEBI" id="CHEBI:57783"/>
        <dbReference type="ChEBI" id="CHEBI:58349"/>
        <dbReference type="ChEBI" id="CHEBI:89828"/>
        <dbReference type="ChEBI" id="CHEBI:89891"/>
    </reaction>
    <physiologicalReaction direction="left-to-right" evidence="1">
        <dbReference type="Rhea" id="RHEA:54849"/>
    </physiologicalReaction>
</comment>
<comment type="catalytic activity">
    <reaction evidence="1">
        <text>heptan-4-one + NADPH + O2 + H(+) = propyl butanoate + NADP(+) + H2O</text>
        <dbReference type="Rhea" id="RHEA:54852"/>
        <dbReference type="ChEBI" id="CHEBI:15377"/>
        <dbReference type="ChEBI" id="CHEBI:15378"/>
        <dbReference type="ChEBI" id="CHEBI:15379"/>
        <dbReference type="ChEBI" id="CHEBI:57783"/>
        <dbReference type="ChEBI" id="CHEBI:58349"/>
        <dbReference type="ChEBI" id="CHEBI:89484"/>
        <dbReference type="ChEBI" id="CHEBI:89719"/>
    </reaction>
    <physiologicalReaction direction="left-to-right" evidence="1">
        <dbReference type="Rhea" id="RHEA:54853"/>
    </physiologicalReaction>
</comment>
<comment type="catalytic activity">
    <reaction evidence="1">
        <text>(2E)-geranial + NADPH + O2 + H(+) = (1E)-2,6-dimethylhepta-1,5-dien-1-yl formate + NADP(+) + H2O</text>
        <dbReference type="Rhea" id="RHEA:54860"/>
        <dbReference type="ChEBI" id="CHEBI:15377"/>
        <dbReference type="ChEBI" id="CHEBI:15378"/>
        <dbReference type="ChEBI" id="CHEBI:15379"/>
        <dbReference type="ChEBI" id="CHEBI:16980"/>
        <dbReference type="ChEBI" id="CHEBI:57783"/>
        <dbReference type="ChEBI" id="CHEBI:58349"/>
        <dbReference type="ChEBI" id="CHEBI:138375"/>
    </reaction>
    <physiologicalReaction direction="left-to-right" evidence="1">
        <dbReference type="Rhea" id="RHEA:54861"/>
    </physiologicalReaction>
</comment>
<comment type="catalytic activity">
    <reaction evidence="1">
        <text>sulcatone + NADPH + O2 + H(+) = 4-methylpent-3-en-1-yl acetate + NADP(+) + H2O</text>
        <dbReference type="Rhea" id="RHEA:54864"/>
        <dbReference type="ChEBI" id="CHEBI:15377"/>
        <dbReference type="ChEBI" id="CHEBI:15378"/>
        <dbReference type="ChEBI" id="CHEBI:15379"/>
        <dbReference type="ChEBI" id="CHEBI:16310"/>
        <dbReference type="ChEBI" id="CHEBI:57783"/>
        <dbReference type="ChEBI" id="CHEBI:58349"/>
        <dbReference type="ChEBI" id="CHEBI:138373"/>
    </reaction>
    <physiologicalReaction direction="left-to-right" evidence="1">
        <dbReference type="Rhea" id="RHEA:54865"/>
    </physiologicalReaction>
</comment>
<comment type="cofactor">
    <cofactor>
        <name>FAD</name>
        <dbReference type="ChEBI" id="CHEBI:57692"/>
    </cofactor>
</comment>
<comment type="subcellular location">
    <subcellularLocation>
        <location evidence="1">Microsome membrane</location>
    </subcellularLocation>
    <subcellularLocation>
        <location evidence="1">Endoplasmic reticulum membrane</location>
    </subcellularLocation>
</comment>
<comment type="similarity">
    <text evidence="6">Belongs to the FMO family.</text>
</comment>
<name>FMO5_RAT</name>
<dbReference type="EC" id="1.14.13.8" evidence="1"/>
<dbReference type="EC" id="1.6.3.1" evidence="1"/>
<dbReference type="EMBL" id="AF458413">
    <property type="protein sequence ID" value="AAM46761.1"/>
    <property type="molecule type" value="mRNA"/>
</dbReference>
<dbReference type="EMBL" id="BC070883">
    <property type="protein sequence ID" value="AAH70883.1"/>
    <property type="molecule type" value="mRNA"/>
</dbReference>
<dbReference type="RefSeq" id="NP_653340.1">
    <property type="nucleotide sequence ID" value="NM_144739.1"/>
</dbReference>
<dbReference type="SMR" id="Q8K4C0"/>
<dbReference type="FunCoup" id="Q8K4C0">
    <property type="interactions" value="531"/>
</dbReference>
<dbReference type="IntAct" id="Q8K4C0">
    <property type="interactions" value="1"/>
</dbReference>
<dbReference type="STRING" id="10116.ENSRNOP00000024423"/>
<dbReference type="iPTMnet" id="Q8K4C0"/>
<dbReference type="PhosphoSitePlus" id="Q8K4C0"/>
<dbReference type="PaxDb" id="10116-ENSRNOP00000024423"/>
<dbReference type="GeneID" id="246248"/>
<dbReference type="KEGG" id="rno:246248"/>
<dbReference type="UCSC" id="RGD:628602">
    <property type="organism name" value="rat"/>
</dbReference>
<dbReference type="AGR" id="RGD:628602"/>
<dbReference type="CTD" id="2330"/>
<dbReference type="RGD" id="628602">
    <property type="gene designation" value="Fmo5"/>
</dbReference>
<dbReference type="eggNOG" id="KOG1399">
    <property type="taxonomic scope" value="Eukaryota"/>
</dbReference>
<dbReference type="InParanoid" id="Q8K4C0"/>
<dbReference type="PhylomeDB" id="Q8K4C0"/>
<dbReference type="TreeFam" id="TF105285"/>
<dbReference type="SABIO-RK" id="Q8K4C0"/>
<dbReference type="PRO" id="PR:Q8K4C0"/>
<dbReference type="Proteomes" id="UP000002494">
    <property type="component" value="Unplaced"/>
</dbReference>
<dbReference type="GO" id="GO:0005789">
    <property type="term" value="C:endoplasmic reticulum membrane"/>
    <property type="evidence" value="ECO:0007669"/>
    <property type="project" value="UniProtKB-SubCell"/>
</dbReference>
<dbReference type="GO" id="GO:0004031">
    <property type="term" value="F:aldehyde oxidase activity"/>
    <property type="evidence" value="ECO:0000266"/>
    <property type="project" value="RGD"/>
</dbReference>
<dbReference type="GO" id="GO:0050660">
    <property type="term" value="F:flavin adenine dinucleotide binding"/>
    <property type="evidence" value="ECO:0007669"/>
    <property type="project" value="InterPro"/>
</dbReference>
<dbReference type="GO" id="GO:0004497">
    <property type="term" value="F:monooxygenase activity"/>
    <property type="evidence" value="ECO:0000266"/>
    <property type="project" value="RGD"/>
</dbReference>
<dbReference type="GO" id="GO:0004499">
    <property type="term" value="F:N,N-dimethylaniline monooxygenase activity"/>
    <property type="evidence" value="ECO:0000314"/>
    <property type="project" value="RGD"/>
</dbReference>
<dbReference type="GO" id="GO:0050661">
    <property type="term" value="F:NADP binding"/>
    <property type="evidence" value="ECO:0007669"/>
    <property type="project" value="InterPro"/>
</dbReference>
<dbReference type="GO" id="GO:0106294">
    <property type="term" value="F:NADPH oxidase H202-forming activity"/>
    <property type="evidence" value="ECO:0007669"/>
    <property type="project" value="RHEA"/>
</dbReference>
<dbReference type="GO" id="GO:0006629">
    <property type="term" value="P:lipid metabolic process"/>
    <property type="evidence" value="ECO:0007669"/>
    <property type="project" value="UniProtKB-KW"/>
</dbReference>
<dbReference type="GO" id="GO:0090181">
    <property type="term" value="P:regulation of cholesterol metabolic process"/>
    <property type="evidence" value="ECO:0000250"/>
    <property type="project" value="UniProtKB"/>
</dbReference>
<dbReference type="GO" id="GO:0006805">
    <property type="term" value="P:xenobiotic metabolic process"/>
    <property type="evidence" value="ECO:0000250"/>
    <property type="project" value="UniProtKB"/>
</dbReference>
<dbReference type="FunFam" id="3.50.50.60:FF:000042">
    <property type="entry name" value="Dimethylaniline monooxygenase [N-oxide-forming]"/>
    <property type="match status" value="1"/>
</dbReference>
<dbReference type="FunFam" id="3.50.50.60:FF:000073">
    <property type="entry name" value="Dimethylaniline monooxygenase [N-oxide-forming]"/>
    <property type="match status" value="1"/>
</dbReference>
<dbReference type="FunFam" id="3.50.50.60:FF:000409">
    <property type="entry name" value="Dimethylaniline monooxygenase [N-oxide-forming]"/>
    <property type="match status" value="1"/>
</dbReference>
<dbReference type="Gene3D" id="3.50.50.60">
    <property type="entry name" value="FAD/NAD(P)-binding domain"/>
    <property type="match status" value="2"/>
</dbReference>
<dbReference type="InterPro" id="IPR036188">
    <property type="entry name" value="FAD/NAD-bd_sf"/>
</dbReference>
<dbReference type="InterPro" id="IPR000960">
    <property type="entry name" value="Flavin_mOase"/>
</dbReference>
<dbReference type="InterPro" id="IPR020946">
    <property type="entry name" value="Flavin_mOase-like"/>
</dbReference>
<dbReference type="InterPro" id="IPR002257">
    <property type="entry name" value="Flavin_mOase_5"/>
</dbReference>
<dbReference type="InterPro" id="IPR050346">
    <property type="entry name" value="FMO-like"/>
</dbReference>
<dbReference type="PANTHER" id="PTHR23023">
    <property type="entry name" value="DIMETHYLANILINE MONOOXYGENASE"/>
    <property type="match status" value="1"/>
</dbReference>
<dbReference type="Pfam" id="PF00743">
    <property type="entry name" value="FMO-like"/>
    <property type="match status" value="1"/>
</dbReference>
<dbReference type="PIRSF" id="PIRSF000332">
    <property type="entry name" value="FMO"/>
    <property type="match status" value="1"/>
</dbReference>
<dbReference type="PRINTS" id="PR00370">
    <property type="entry name" value="FMOXYGENASE"/>
</dbReference>
<dbReference type="PRINTS" id="PR01125">
    <property type="entry name" value="FMOXYGENASE5"/>
</dbReference>
<dbReference type="SUPFAM" id="SSF51905">
    <property type="entry name" value="FAD/NAD(P)-binding domain"/>
    <property type="match status" value="2"/>
</dbReference>
<organism>
    <name type="scientific">Rattus norvegicus</name>
    <name type="common">Rat</name>
    <dbReference type="NCBI Taxonomy" id="10116"/>
    <lineage>
        <taxon>Eukaryota</taxon>
        <taxon>Metazoa</taxon>
        <taxon>Chordata</taxon>
        <taxon>Craniata</taxon>
        <taxon>Vertebrata</taxon>
        <taxon>Euteleostomi</taxon>
        <taxon>Mammalia</taxon>
        <taxon>Eutheria</taxon>
        <taxon>Euarchontoglires</taxon>
        <taxon>Glires</taxon>
        <taxon>Rodentia</taxon>
        <taxon>Myomorpha</taxon>
        <taxon>Muroidea</taxon>
        <taxon>Muridae</taxon>
        <taxon>Murinae</taxon>
        <taxon>Rattus</taxon>
    </lineage>
</organism>
<feature type="chain" id="PRO_0000147668" description="Flavin-containing monooxygenase 5">
    <location>
        <begin position="1"/>
        <end position="533"/>
    </location>
</feature>
<feature type="transmembrane region" description="Helical" evidence="4">
    <location>
        <begin position="513"/>
        <end position="533"/>
    </location>
</feature>
<feature type="binding site" evidence="3">
    <location>
        <begin position="10"/>
        <end position="14"/>
    </location>
    <ligand>
        <name>FAD</name>
        <dbReference type="ChEBI" id="CHEBI:57692"/>
    </ligand>
</feature>
<feature type="binding site" evidence="3">
    <location>
        <position position="33"/>
    </location>
    <ligand>
        <name>FAD</name>
        <dbReference type="ChEBI" id="CHEBI:57692"/>
    </ligand>
</feature>
<feature type="binding site" evidence="3">
    <location>
        <begin position="41"/>
        <end position="42"/>
    </location>
    <ligand>
        <name>FAD</name>
        <dbReference type="ChEBI" id="CHEBI:57692"/>
    </ligand>
</feature>
<feature type="binding site" evidence="3">
    <location>
        <begin position="62"/>
        <end position="63"/>
    </location>
    <ligand>
        <name>FAD</name>
        <dbReference type="ChEBI" id="CHEBI:57692"/>
    </ligand>
</feature>
<feature type="binding site" evidence="3">
    <location>
        <begin position="196"/>
        <end position="199"/>
    </location>
    <ligand>
        <name>NADP(+)</name>
        <dbReference type="ChEBI" id="CHEBI:58349"/>
    </ligand>
</feature>
<feature type="modified residue" description="Dimethylated arginine" evidence="5">
    <location>
        <position position="5"/>
    </location>
</feature>
<feature type="modified residue" description="Phosphoserine" evidence="1">
    <location>
        <position position="54"/>
    </location>
</feature>
<feature type="modified residue" description="Phosphotyrosine" evidence="1">
    <location>
        <position position="56"/>
    </location>
</feature>
<feature type="modified residue" description="Phosphoserine" evidence="1">
    <location>
        <position position="58"/>
    </location>
</feature>
<feature type="modified residue" description="Phosphothreonine" evidence="1">
    <location>
        <position position="284"/>
    </location>
</feature>
<feature type="modified residue" description="Phosphoserine" evidence="2">
    <location>
        <position position="401"/>
    </location>
</feature>
<feature type="sequence conflict" description="In Ref. 2; AAH70883." evidence="6" ref="2">
    <original>R</original>
    <variation>M</variation>
    <location>
        <position position="34"/>
    </location>
</feature>
<feature type="sequence conflict" description="In Ref. 2; AAH70883." evidence="6" ref="2">
    <original>K</original>
    <variation>E</variation>
    <location>
        <position position="50"/>
    </location>
</feature>
<feature type="sequence conflict" description="In Ref. 2; AAH70883." evidence="6" ref="2">
    <original>Q</original>
    <variation>E</variation>
    <location>
        <position position="136"/>
    </location>
</feature>
<feature type="sequence conflict" description="In Ref. 2; AAH70883." evidence="6" ref="2">
    <original>R</original>
    <variation>H</variation>
    <location>
        <position position="228"/>
    </location>
</feature>
<sequence length="533" mass="60056">MAKKRIAVIGSGASGLTCIKCCLEEGLEPVCFERSDDIGGLWRYQENPEKGRASIYKSVIINTSKEMMCFSDYPIPDHYPNFMHNSQVLEYFRMYAKEFGLLKYIQFKTTVCSVKKQPDFSTSGQWQVVTEHEGKQQVDVFDGVLVCTGHHTDPHLPLDSFPGIEKFKGKYFHSREYKNPVEFTGKRVIVIGIGNSGGDLAVEISHTAKQVFLSTRRGAWILNRVGKRGYPIDILLSSRITNYLSKICGSALKNRYMEKQLNQRFDHEMFGLKPKHSALGQHPTINDDLPNRIISGLVKVKGNVKEFTETAAIFEDGSREDDIDVVIFATGYSFAFPFLEDSVKVVQNKVSLYKKVFPPNLEKPTLAIIGLIQPLGAIMPISELQGRWATQVFKGLKKLPSQSEMMAEINKTREEMAKRYVDSQRHTIQGDYIDTMEEIADLVGVRPNLLSLAFTDPKLAFQLLVGPCTPVQYRLQGPGKWAGARKTILTTEDRIRKPLMTRVVERDSSGTSLVTVRVLMLAVTFLAVILAYF</sequence>
<keyword id="KW-0256">Endoplasmic reticulum</keyword>
<keyword id="KW-0274">FAD</keyword>
<keyword id="KW-0285">Flavoprotein</keyword>
<keyword id="KW-0443">Lipid metabolism</keyword>
<keyword id="KW-0472">Membrane</keyword>
<keyword id="KW-0488">Methylation</keyword>
<keyword id="KW-0492">Microsome</keyword>
<keyword id="KW-0503">Monooxygenase</keyword>
<keyword id="KW-0521">NADP</keyword>
<keyword id="KW-0560">Oxidoreductase</keyword>
<keyword id="KW-0597">Phosphoprotein</keyword>
<keyword id="KW-1185">Reference proteome</keyword>
<keyword id="KW-0812">Transmembrane</keyword>
<keyword id="KW-1133">Transmembrane helix</keyword>
<reference key="1">
    <citation type="submission" date="2001-12" db="EMBL/GenBank/DDBJ databases">
        <title>Cloning, sequencing of flavin-containing monooxygenase 5 (FMO5) in the rat.</title>
        <authorList>
            <person name="Lattard V."/>
            <person name="Benoit E."/>
        </authorList>
    </citation>
    <scope>NUCLEOTIDE SEQUENCE [MRNA]</scope>
    <source>
        <strain>Sprague-Dawley</strain>
    </source>
</reference>
<reference key="2">
    <citation type="journal article" date="2004" name="Genome Res.">
        <title>The status, quality, and expansion of the NIH full-length cDNA project: the Mammalian Gene Collection (MGC).</title>
        <authorList>
            <consortium name="The MGC Project Team"/>
        </authorList>
    </citation>
    <scope>NUCLEOTIDE SEQUENCE [LARGE SCALE MRNA]</scope>
    <source>
        <tissue>Lung</tissue>
    </source>
</reference>
<reference key="3">
    <citation type="journal article" date="2004" name="Mol. Biol. Cell">
        <title>Organellar proteomics reveals Golgi arginine dimethylation.</title>
        <authorList>
            <person name="Wu C.C."/>
            <person name="MacCoss M.J."/>
            <person name="Mardones G."/>
            <person name="Finnigan C."/>
            <person name="Mogelsvang S."/>
            <person name="Yates J.R. III"/>
            <person name="Howell K.E."/>
        </authorList>
    </citation>
    <scope>METHYLATION AT ARG-5</scope>
    <scope>IDENTIFICATION BY MASS SPECTROMETRY</scope>
</reference>
<accession>Q8K4C0</accession>
<accession>Q6IRL0</accession>
<evidence type="ECO:0000250" key="1">
    <source>
        <dbReference type="UniProtKB" id="P49326"/>
    </source>
</evidence>
<evidence type="ECO:0000250" key="2">
    <source>
        <dbReference type="UniProtKB" id="P97872"/>
    </source>
</evidence>
<evidence type="ECO:0000250" key="3">
    <source>
        <dbReference type="UniProtKB" id="Q9HFE4"/>
    </source>
</evidence>
<evidence type="ECO:0000255" key="4"/>
<evidence type="ECO:0000269" key="5">
    <source>
    </source>
</evidence>
<evidence type="ECO:0000305" key="6"/>
<evidence type="ECO:0000312" key="7">
    <source>
        <dbReference type="RGD" id="628602"/>
    </source>
</evidence>
<gene>
    <name evidence="7" type="primary">Fmo5</name>
</gene>
<proteinExistence type="evidence at protein level"/>
<protein>
    <recommendedName>
        <fullName>Flavin-containing monooxygenase 5</fullName>
        <shortName>FMO 5</shortName>
    </recommendedName>
    <alternativeName>
        <fullName evidence="6">Dimethylaniline monooxygenase [N-oxide-forming] 5</fullName>
        <ecNumber evidence="1">1.14.13.8</ecNumber>
    </alternativeName>
    <alternativeName>
        <fullName>Dimethylaniline oxidase 5</fullName>
    </alternativeName>
    <alternativeName>
        <fullName>Hepatic flavin-containing monooxygenase 5</fullName>
    </alternativeName>
    <alternativeName>
        <fullName evidence="1">NADPH oxidase</fullName>
        <ecNumber evidence="1">1.6.3.1</ecNumber>
    </alternativeName>
</protein>